<keyword id="KW-0067">ATP-binding</keyword>
<keyword id="KW-0418">Kinase</keyword>
<keyword id="KW-0545">Nucleotide biosynthesis</keyword>
<keyword id="KW-0547">Nucleotide-binding</keyword>
<keyword id="KW-0808">Transferase</keyword>
<accession>Q03E60</accession>
<proteinExistence type="inferred from homology"/>
<protein>
    <recommendedName>
        <fullName evidence="1">Thymidylate kinase</fullName>
        <ecNumber evidence="1">2.7.4.9</ecNumber>
    </recommendedName>
    <alternativeName>
        <fullName evidence="1">dTMP kinase</fullName>
    </alternativeName>
</protein>
<reference key="1">
    <citation type="journal article" date="2006" name="Proc. Natl. Acad. Sci. U.S.A.">
        <title>Comparative genomics of the lactic acid bacteria.</title>
        <authorList>
            <person name="Makarova K.S."/>
            <person name="Slesarev A."/>
            <person name="Wolf Y.I."/>
            <person name="Sorokin A."/>
            <person name="Mirkin B."/>
            <person name="Koonin E.V."/>
            <person name="Pavlov A."/>
            <person name="Pavlova N."/>
            <person name="Karamychev V."/>
            <person name="Polouchine N."/>
            <person name="Shakhova V."/>
            <person name="Grigoriev I."/>
            <person name="Lou Y."/>
            <person name="Rohksar D."/>
            <person name="Lucas S."/>
            <person name="Huang K."/>
            <person name="Goodstein D.M."/>
            <person name="Hawkins T."/>
            <person name="Plengvidhya V."/>
            <person name="Welker D."/>
            <person name="Hughes J."/>
            <person name="Goh Y."/>
            <person name="Benson A."/>
            <person name="Baldwin K."/>
            <person name="Lee J.-H."/>
            <person name="Diaz-Muniz I."/>
            <person name="Dosti B."/>
            <person name="Smeianov V."/>
            <person name="Wechter W."/>
            <person name="Barabote R."/>
            <person name="Lorca G."/>
            <person name="Altermann E."/>
            <person name="Barrangou R."/>
            <person name="Ganesan B."/>
            <person name="Xie Y."/>
            <person name="Rawsthorne H."/>
            <person name="Tamir D."/>
            <person name="Parker C."/>
            <person name="Breidt F."/>
            <person name="Broadbent J.R."/>
            <person name="Hutkins R."/>
            <person name="O'Sullivan D."/>
            <person name="Steele J."/>
            <person name="Unlu G."/>
            <person name="Saier M.H. Jr."/>
            <person name="Klaenhammer T."/>
            <person name="Richardson P."/>
            <person name="Kozyavkin S."/>
            <person name="Weimer B.C."/>
            <person name="Mills D.A."/>
        </authorList>
    </citation>
    <scope>NUCLEOTIDE SEQUENCE [LARGE SCALE GENOMIC DNA]</scope>
    <source>
        <strain>ATCC 25745 / CCUG 21536 / LMG 10740 / 183-1w</strain>
    </source>
</reference>
<organism>
    <name type="scientific">Pediococcus pentosaceus (strain ATCC 25745 / CCUG 21536 / LMG 10740 / 183-1w)</name>
    <dbReference type="NCBI Taxonomy" id="278197"/>
    <lineage>
        <taxon>Bacteria</taxon>
        <taxon>Bacillati</taxon>
        <taxon>Bacillota</taxon>
        <taxon>Bacilli</taxon>
        <taxon>Lactobacillales</taxon>
        <taxon>Lactobacillaceae</taxon>
        <taxon>Pediococcus</taxon>
    </lineage>
</organism>
<evidence type="ECO:0000255" key="1">
    <source>
        <dbReference type="HAMAP-Rule" id="MF_00165"/>
    </source>
</evidence>
<gene>
    <name evidence="1" type="primary">tmk</name>
    <name type="ordered locus">PEPE_1481</name>
</gene>
<comment type="function">
    <text evidence="1">Phosphorylation of dTMP to form dTDP in both de novo and salvage pathways of dTTP synthesis.</text>
</comment>
<comment type="catalytic activity">
    <reaction evidence="1">
        <text>dTMP + ATP = dTDP + ADP</text>
        <dbReference type="Rhea" id="RHEA:13517"/>
        <dbReference type="ChEBI" id="CHEBI:30616"/>
        <dbReference type="ChEBI" id="CHEBI:58369"/>
        <dbReference type="ChEBI" id="CHEBI:63528"/>
        <dbReference type="ChEBI" id="CHEBI:456216"/>
        <dbReference type="EC" id="2.7.4.9"/>
    </reaction>
</comment>
<comment type="similarity">
    <text evidence="1">Belongs to the thymidylate kinase family.</text>
</comment>
<name>KTHY_PEDPA</name>
<feature type="chain" id="PRO_1000023240" description="Thymidylate kinase">
    <location>
        <begin position="1"/>
        <end position="209"/>
    </location>
</feature>
<feature type="binding site" evidence="1">
    <location>
        <begin position="10"/>
        <end position="17"/>
    </location>
    <ligand>
        <name>ATP</name>
        <dbReference type="ChEBI" id="CHEBI:30616"/>
    </ligand>
</feature>
<sequence>MNGHFISFEGPDGAGKTTVLQAMVEHYQQRLKDQLTVTREPGGNPISEAIRTIILDKNNTEMDERTEALLYAAARRQHLVETILPALKKNHVVFCDRFVDSSIAYQGAGRKIGTDAVYQMNLFATEGALPEKTIYLDVPSELGLKRIMTHRTEDVDRLDLEQLDFHQRVRSAYLDLAKKFPDRIVVIDASQELDDVKRDVIEVLDQILN</sequence>
<dbReference type="EC" id="2.7.4.9" evidence="1"/>
<dbReference type="EMBL" id="CP000422">
    <property type="protein sequence ID" value="ABJ68512.1"/>
    <property type="molecule type" value="Genomic_DNA"/>
</dbReference>
<dbReference type="RefSeq" id="WP_002833271.1">
    <property type="nucleotide sequence ID" value="NC_008525.1"/>
</dbReference>
<dbReference type="SMR" id="Q03E60"/>
<dbReference type="STRING" id="278197.PEPE_1481"/>
<dbReference type="GeneID" id="33062593"/>
<dbReference type="KEGG" id="ppe:PEPE_1481"/>
<dbReference type="eggNOG" id="COG0125">
    <property type="taxonomic scope" value="Bacteria"/>
</dbReference>
<dbReference type="HOGENOM" id="CLU_049131_0_2_9"/>
<dbReference type="OrthoDB" id="9774907at2"/>
<dbReference type="Proteomes" id="UP000000773">
    <property type="component" value="Chromosome"/>
</dbReference>
<dbReference type="GO" id="GO:0005829">
    <property type="term" value="C:cytosol"/>
    <property type="evidence" value="ECO:0007669"/>
    <property type="project" value="TreeGrafter"/>
</dbReference>
<dbReference type="GO" id="GO:0005524">
    <property type="term" value="F:ATP binding"/>
    <property type="evidence" value="ECO:0007669"/>
    <property type="project" value="UniProtKB-UniRule"/>
</dbReference>
<dbReference type="GO" id="GO:0004798">
    <property type="term" value="F:dTMP kinase activity"/>
    <property type="evidence" value="ECO:0007669"/>
    <property type="project" value="UniProtKB-UniRule"/>
</dbReference>
<dbReference type="GO" id="GO:0006233">
    <property type="term" value="P:dTDP biosynthetic process"/>
    <property type="evidence" value="ECO:0007669"/>
    <property type="project" value="InterPro"/>
</dbReference>
<dbReference type="GO" id="GO:0006235">
    <property type="term" value="P:dTTP biosynthetic process"/>
    <property type="evidence" value="ECO:0007669"/>
    <property type="project" value="UniProtKB-UniRule"/>
</dbReference>
<dbReference type="GO" id="GO:0006227">
    <property type="term" value="P:dUDP biosynthetic process"/>
    <property type="evidence" value="ECO:0007669"/>
    <property type="project" value="TreeGrafter"/>
</dbReference>
<dbReference type="CDD" id="cd01672">
    <property type="entry name" value="TMPK"/>
    <property type="match status" value="1"/>
</dbReference>
<dbReference type="FunFam" id="3.40.50.300:FF:000225">
    <property type="entry name" value="Thymidylate kinase"/>
    <property type="match status" value="1"/>
</dbReference>
<dbReference type="Gene3D" id="3.40.50.300">
    <property type="entry name" value="P-loop containing nucleotide triphosphate hydrolases"/>
    <property type="match status" value="1"/>
</dbReference>
<dbReference type="HAMAP" id="MF_00165">
    <property type="entry name" value="Thymidylate_kinase"/>
    <property type="match status" value="1"/>
</dbReference>
<dbReference type="InterPro" id="IPR027417">
    <property type="entry name" value="P-loop_NTPase"/>
</dbReference>
<dbReference type="InterPro" id="IPR039430">
    <property type="entry name" value="Thymidylate_kin-like_dom"/>
</dbReference>
<dbReference type="InterPro" id="IPR018094">
    <property type="entry name" value="Thymidylate_kinase"/>
</dbReference>
<dbReference type="NCBIfam" id="TIGR00041">
    <property type="entry name" value="DTMP_kinase"/>
    <property type="match status" value="1"/>
</dbReference>
<dbReference type="PANTHER" id="PTHR10344">
    <property type="entry name" value="THYMIDYLATE KINASE"/>
    <property type="match status" value="1"/>
</dbReference>
<dbReference type="PANTHER" id="PTHR10344:SF4">
    <property type="entry name" value="UMP-CMP KINASE 2, MITOCHONDRIAL"/>
    <property type="match status" value="1"/>
</dbReference>
<dbReference type="Pfam" id="PF02223">
    <property type="entry name" value="Thymidylate_kin"/>
    <property type="match status" value="1"/>
</dbReference>
<dbReference type="SUPFAM" id="SSF52540">
    <property type="entry name" value="P-loop containing nucleoside triphosphate hydrolases"/>
    <property type="match status" value="1"/>
</dbReference>